<organism>
    <name type="scientific">Plasmodium falciparum (isolate 3D7)</name>
    <dbReference type="NCBI Taxonomy" id="36329"/>
    <lineage>
        <taxon>Eukaryota</taxon>
        <taxon>Sar</taxon>
        <taxon>Alveolata</taxon>
        <taxon>Apicomplexa</taxon>
        <taxon>Aconoidasida</taxon>
        <taxon>Haemosporida</taxon>
        <taxon>Plasmodiidae</taxon>
        <taxon>Plasmodium</taxon>
        <taxon>Plasmodium (Laverania)</taxon>
    </lineage>
</organism>
<proteinExistence type="inferred from homology"/>
<protein>
    <recommendedName>
        <fullName>Sporozoite surface protein P36</fullName>
    </recommendedName>
</protein>
<accession>Q8I1Y5</accession>
<name>PF36_PLAF7</name>
<feature type="signal peptide" evidence="2">
    <location>
        <begin position="1"/>
        <end position="33"/>
    </location>
</feature>
<feature type="chain" id="PRO_0000423570" description="Sporozoite surface protein P36">
    <location>
        <begin position="34"/>
        <end position="379"/>
    </location>
</feature>
<feature type="domain" description="6-Cys 1">
    <location>
        <begin position="69"/>
        <end position="206"/>
    </location>
</feature>
<feature type="domain" description="6-Cys 2">
    <location>
        <begin position="215"/>
        <end position="379"/>
    </location>
</feature>
<feature type="glycosylation site" description="N-linked (GlcNAc...) asparagine" evidence="2">
    <location>
        <position position="98"/>
    </location>
</feature>
<feature type="glycosylation site" description="N-linked (GlcNAc...) asparagine" evidence="2">
    <location>
        <position position="118"/>
    </location>
</feature>
<feature type="glycosylation site" description="N-linked (GlcNAc...) asparagine" evidence="2">
    <location>
        <position position="206"/>
    </location>
</feature>
<feature type="glycosylation site" description="N-linked (GlcNAc...) asparagine" evidence="2">
    <location>
        <position position="298"/>
    </location>
</feature>
<feature type="glycosylation site" description="N-linked (GlcNAc...) asparagine" evidence="2">
    <location>
        <position position="374"/>
    </location>
</feature>
<feature type="disulfide bond" evidence="1">
    <location>
        <begin position="91"/>
        <end position="101"/>
    </location>
</feature>
<feature type="disulfide bond" evidence="1">
    <location>
        <begin position="115"/>
        <end position="186"/>
    </location>
</feature>
<feature type="disulfide bond" evidence="1">
    <location>
        <begin position="129"/>
        <end position="184"/>
    </location>
</feature>
<feature type="disulfide bond" evidence="1">
    <location>
        <begin position="219"/>
        <end position="243"/>
    </location>
</feature>
<feature type="disulfide bond" evidence="1">
    <location>
        <begin position="257"/>
        <end position="360"/>
    </location>
</feature>
<feature type="disulfide bond" evidence="1">
    <location>
        <begin position="295"/>
        <end position="358"/>
    </location>
</feature>
<keyword id="KW-1003">Cell membrane</keyword>
<keyword id="KW-1015">Disulfide bond</keyword>
<keyword id="KW-0325">Glycoprotein</keyword>
<keyword id="KW-0461">Malaria</keyword>
<keyword id="KW-0472">Membrane</keyword>
<keyword id="KW-1185">Reference proteome</keyword>
<keyword id="KW-0677">Repeat</keyword>
<keyword id="KW-0732">Signal</keyword>
<gene>
    <name type="primary">PF36</name>
    <name type="ORF">PFD0210c</name>
</gene>
<dbReference type="EMBL" id="AL844503">
    <property type="protein sequence ID" value="CAD49136.2"/>
    <property type="molecule type" value="Genomic_DNA"/>
</dbReference>
<dbReference type="RefSeq" id="XP_001351356.2">
    <property type="nucleotide sequence ID" value="XM_001351320.2"/>
</dbReference>
<dbReference type="SMR" id="Q8I1Y5"/>
<dbReference type="BioGRID" id="1207788">
    <property type="interactions" value="7"/>
</dbReference>
<dbReference type="FunCoup" id="Q8I1Y5">
    <property type="interactions" value="677"/>
</dbReference>
<dbReference type="IntAct" id="Q8I1Y5">
    <property type="interactions" value="6"/>
</dbReference>
<dbReference type="STRING" id="36329.Q8I1Y5"/>
<dbReference type="GlyCosmos" id="Q8I1Y5">
    <property type="glycosylation" value="5 sites, No reported glycans"/>
</dbReference>
<dbReference type="PaxDb" id="5833-PFD0210c"/>
<dbReference type="EnsemblProtists" id="CAD49136">
    <property type="protein sequence ID" value="CAD49136"/>
    <property type="gene ID" value="PF3D7_0404400"/>
</dbReference>
<dbReference type="KEGG" id="pfa:PF3D7_0404400"/>
<dbReference type="VEuPathDB" id="PlasmoDB:PF3D7_0404400"/>
<dbReference type="HOGENOM" id="CLU_786380_0_0_1"/>
<dbReference type="InParanoid" id="Q8I1Y5"/>
<dbReference type="OMA" id="PSNCFST"/>
<dbReference type="OrthoDB" id="368426at2759"/>
<dbReference type="PhylomeDB" id="Q8I1Y5"/>
<dbReference type="Proteomes" id="UP000001450">
    <property type="component" value="Chromosome 4"/>
</dbReference>
<dbReference type="GO" id="GO:0009986">
    <property type="term" value="C:cell surface"/>
    <property type="evidence" value="ECO:0007669"/>
    <property type="project" value="UniProtKB-SubCell"/>
</dbReference>
<dbReference type="GO" id="GO:0005886">
    <property type="term" value="C:plasma membrane"/>
    <property type="evidence" value="ECO:0007669"/>
    <property type="project" value="UniProtKB-SubCell"/>
</dbReference>
<dbReference type="FunFam" id="2.60.40.2860:FF:000024">
    <property type="entry name" value="6-cysteine protein"/>
    <property type="match status" value="1"/>
</dbReference>
<dbReference type="Gene3D" id="2.60.40.2860">
    <property type="match status" value="2"/>
</dbReference>
<dbReference type="InterPro" id="IPR010884">
    <property type="entry name" value="6_CYS_dom"/>
</dbReference>
<dbReference type="InterPro" id="IPR038160">
    <property type="entry name" value="6_CYS_dom_sf"/>
</dbReference>
<dbReference type="InterPro" id="IPR051444">
    <property type="entry name" value="Parasite_Repro/Invasion_Surf"/>
</dbReference>
<dbReference type="PANTHER" id="PTHR38796">
    <property type="match status" value="1"/>
</dbReference>
<dbReference type="PANTHER" id="PTHR38796:SF1">
    <property type="entry name" value="ANCHORED PROTEIN, PUTATIVE (AFU_ORTHOLOGUE AFUA_4G09600)-RELATED"/>
    <property type="match status" value="1"/>
</dbReference>
<dbReference type="Pfam" id="PF07422">
    <property type="entry name" value="s48_45"/>
    <property type="match status" value="1"/>
</dbReference>
<dbReference type="SMART" id="SM00970">
    <property type="entry name" value="s48_45"/>
    <property type="match status" value="1"/>
</dbReference>
<dbReference type="PROSITE" id="PS51701">
    <property type="entry name" value="6_CYS"/>
    <property type="match status" value="2"/>
</dbReference>
<evidence type="ECO:0000250" key="1"/>
<evidence type="ECO:0000255" key="2"/>
<evidence type="ECO:0000269" key="3">
    <source>
    </source>
</evidence>
<reference key="1">
    <citation type="journal article" date="2002" name="Nature">
        <title>Genome sequence of the human malaria parasite Plasmodium falciparum.</title>
        <authorList>
            <person name="Gardner M.J."/>
            <person name="Hall N."/>
            <person name="Fung E."/>
            <person name="White O."/>
            <person name="Berriman M."/>
            <person name="Hyman R.W."/>
            <person name="Carlton J.M."/>
            <person name="Pain A."/>
            <person name="Nelson K.E."/>
            <person name="Bowman S."/>
            <person name="Paulsen I.T."/>
            <person name="James K.D."/>
            <person name="Eisen J.A."/>
            <person name="Rutherford K.M."/>
            <person name="Salzberg S.L."/>
            <person name="Craig A."/>
            <person name="Kyes S."/>
            <person name="Chan M.-S."/>
            <person name="Nene V."/>
            <person name="Shallom S.J."/>
            <person name="Suh B."/>
            <person name="Peterson J."/>
            <person name="Angiuoli S."/>
            <person name="Pertea M."/>
            <person name="Allen J."/>
            <person name="Selengut J."/>
            <person name="Haft D."/>
            <person name="Mather M.W."/>
            <person name="Vaidya A.B."/>
            <person name="Martin D.M.A."/>
            <person name="Fairlamb A.H."/>
            <person name="Fraunholz M.J."/>
            <person name="Roos D.S."/>
            <person name="Ralph S.A."/>
            <person name="McFadden G.I."/>
            <person name="Cummings L.M."/>
            <person name="Subramanian G.M."/>
            <person name="Mungall C."/>
            <person name="Venter J.C."/>
            <person name="Carucci D.J."/>
            <person name="Hoffman S.L."/>
            <person name="Newbold C."/>
            <person name="Davis R.W."/>
            <person name="Fraser C.M."/>
            <person name="Barrell B.G."/>
        </authorList>
    </citation>
    <scope>NUCLEOTIDE SEQUENCE [LARGE SCALE GENOMIC DNA]</scope>
    <source>
        <strain>3D7</strain>
    </source>
</reference>
<reference key="2">
    <citation type="journal article" date="2002" name="Nature">
        <title>Sequence of Plasmodium falciparum chromosomes 1, 3-9 and 13.</title>
        <authorList>
            <person name="Hall N."/>
            <person name="Pain A."/>
            <person name="Berriman M."/>
            <person name="Churcher C.M."/>
            <person name="Harris B."/>
            <person name="Harris D."/>
            <person name="Mungall K.L."/>
            <person name="Bowman S."/>
            <person name="Atkin R."/>
            <person name="Baker S."/>
            <person name="Barron A."/>
            <person name="Brooks K."/>
            <person name="Buckee C.O."/>
            <person name="Burrows C."/>
            <person name="Cherevach I."/>
            <person name="Chillingworth C."/>
            <person name="Chillingworth T."/>
            <person name="Christodoulou Z."/>
            <person name="Clark L."/>
            <person name="Clark R."/>
            <person name="Corton C."/>
            <person name="Cronin A."/>
            <person name="Davies R.M."/>
            <person name="Davis P."/>
            <person name="Dear P."/>
            <person name="Dearden F."/>
            <person name="Doggett J."/>
            <person name="Feltwell T."/>
            <person name="Goble A."/>
            <person name="Goodhead I."/>
            <person name="Gwilliam R."/>
            <person name="Hamlin N."/>
            <person name="Hance Z."/>
            <person name="Harper D."/>
            <person name="Hauser H."/>
            <person name="Hornsby T."/>
            <person name="Holroyd S."/>
            <person name="Horrocks P."/>
            <person name="Humphray S."/>
            <person name="Jagels K."/>
            <person name="James K.D."/>
            <person name="Johnson D."/>
            <person name="Kerhornou A."/>
            <person name="Knights A."/>
            <person name="Konfortov B."/>
            <person name="Kyes S."/>
            <person name="Larke N."/>
            <person name="Lawson D."/>
            <person name="Lennard N."/>
            <person name="Line A."/>
            <person name="Maddison M."/>
            <person name="Mclean J."/>
            <person name="Mooney P."/>
            <person name="Moule S."/>
            <person name="Murphy L."/>
            <person name="Oliver K."/>
            <person name="Ormond D."/>
            <person name="Price C."/>
            <person name="Quail M.A."/>
            <person name="Rabbinowitsch E."/>
            <person name="Rajandream M.A."/>
            <person name="Rutter S."/>
            <person name="Rutherford K.M."/>
            <person name="Sanders M."/>
            <person name="Simmonds M."/>
            <person name="Seeger K."/>
            <person name="Sharp S."/>
            <person name="Smith R."/>
            <person name="Squares R."/>
            <person name="Squares S."/>
            <person name="Stevens K."/>
            <person name="Taylor K."/>
            <person name="Tivey A."/>
            <person name="Unwin L."/>
            <person name="Whitehead S."/>
            <person name="Woodward J.R."/>
            <person name="Sulston J.E."/>
            <person name="Craig A."/>
            <person name="Newbold C."/>
            <person name="Barrell B.G."/>
        </authorList>
    </citation>
    <scope>NUCLEOTIDE SEQUENCE [LARGE SCALE GENOMIC DNA]</scope>
    <source>
        <strain>3D7</strain>
    </source>
</reference>
<reference key="3">
    <citation type="journal article" date="2009" name="Proc. Natl. Acad. Sci. U.S.A.">
        <title>Preerythrocytic, live-attenuated Plasmodium falciparum vaccine candidates by design.</title>
        <authorList>
            <person name="VanBuskirk K.M."/>
            <person name="O'Neill M.T."/>
            <person name="De La Vega P."/>
            <person name="Maier A.G."/>
            <person name="Krzych U."/>
            <person name="Williams J."/>
            <person name="Dowler M.G."/>
            <person name="Sacci J.B. Jr."/>
            <person name="Kangwanrangsan N."/>
            <person name="Tsuboi T."/>
            <person name="Kneteman N.M."/>
            <person name="Heppner D.G. Jr."/>
            <person name="Murdock B.A."/>
            <person name="Mikolajczak S.A."/>
            <person name="Aly A.S."/>
            <person name="Cowman A.F."/>
            <person name="Kappe S.H."/>
        </authorList>
    </citation>
    <scope>FUNCTION</scope>
    <scope>DISRUPTION PHENOTYPE</scope>
</reference>
<comment type="function">
    <text evidence="3">Involved in sporozoite infection of hepatocytes and replication therein.</text>
</comment>
<comment type="subcellular location">
    <subcellularLocation>
        <location evidence="1">Cell surface</location>
    </subcellularLocation>
    <subcellularLocation>
        <location evidence="1">Cell membrane</location>
    </subcellularLocation>
    <text evidence="1">Present on the surface of sporozoite.</text>
</comment>
<comment type="disruption phenotype">
    <text evidence="3">Attenuated parasites that cannot commit to infection, even when they encounter with hepatocytes, resulting in continuous traversal of hepatocytes.</text>
</comment>
<sequence length="379" mass="44568">MAYNIWEEYIMANFHNVYPVVTNLFLFIALSYSFCIFVFFSFFFVKMRKVIYFFLIICLHSNVGWHPFFVFFCGVSGLYVKELQVGNYYICNLKDYANETCTVNYDYNKMIKLLCPINKSYEEYDDRYCFKFIGIRDRLVINNQEEPIMDTLPGIIIENLNMFDRYNVGIYMPFYVKEDITIVCTCESSKDSEAITPYLKIHVKANNSFNKEGEFIKGCDYGNNKGKHQFLTNTLKQEENFLCEINANPGEVVGMNCINFEEYTTTTTINNKKKKHQNKNNKNNFDVIQLRPPHCFSNVSISMSFLRVVTMNVNNLLPEAKYYPEVYSFPKDKKFQKYSTISYLWIPENVPHDILFYCHCNFPQGKGIGLFNINKTVES</sequence>